<organism>
    <name type="scientific">Mycolicibacterium smegmatis (strain ATCC 700084 / mc(2)155)</name>
    <name type="common">Mycobacterium smegmatis</name>
    <dbReference type="NCBI Taxonomy" id="246196"/>
    <lineage>
        <taxon>Bacteria</taxon>
        <taxon>Bacillati</taxon>
        <taxon>Actinomycetota</taxon>
        <taxon>Actinomycetes</taxon>
        <taxon>Mycobacteriales</taxon>
        <taxon>Mycobacteriaceae</taxon>
        <taxon>Mycolicibacterium</taxon>
    </lineage>
</organism>
<reference key="1">
    <citation type="submission" date="2006-10" db="EMBL/GenBank/DDBJ databases">
        <authorList>
            <person name="Fleischmann R.D."/>
            <person name="Dodson R.J."/>
            <person name="Haft D.H."/>
            <person name="Merkel J.S."/>
            <person name="Nelson W.C."/>
            <person name="Fraser C.M."/>
        </authorList>
    </citation>
    <scope>NUCLEOTIDE SEQUENCE [LARGE SCALE GENOMIC DNA]</scope>
    <source>
        <strain>ATCC 700084 / mc(2)155</strain>
    </source>
</reference>
<reference key="2">
    <citation type="journal article" date="2007" name="Genome Biol.">
        <title>Interrupted coding sequences in Mycobacterium smegmatis: authentic mutations or sequencing errors?</title>
        <authorList>
            <person name="Deshayes C."/>
            <person name="Perrodou E."/>
            <person name="Gallien S."/>
            <person name="Euphrasie D."/>
            <person name="Schaeffer C."/>
            <person name="Van-Dorsselaer A."/>
            <person name="Poch O."/>
            <person name="Lecompte O."/>
            <person name="Reyrat J.-M."/>
        </authorList>
    </citation>
    <scope>NUCLEOTIDE SEQUENCE [LARGE SCALE GENOMIC DNA]</scope>
    <source>
        <strain>ATCC 700084 / mc(2)155</strain>
    </source>
</reference>
<reference key="3">
    <citation type="journal article" date="2009" name="Genome Res.">
        <title>Ortho-proteogenomics: multiple proteomes investigation through orthology and a new MS-based protocol.</title>
        <authorList>
            <person name="Gallien S."/>
            <person name="Perrodou E."/>
            <person name="Carapito C."/>
            <person name="Deshayes C."/>
            <person name="Reyrat J.-M."/>
            <person name="Van Dorsselaer A."/>
            <person name="Poch O."/>
            <person name="Schaeffer C."/>
            <person name="Lecompte O."/>
        </authorList>
    </citation>
    <scope>NUCLEOTIDE SEQUENCE [LARGE SCALE GENOMIC DNA]</scope>
    <source>
        <strain>ATCC 700084 / mc(2)155</strain>
    </source>
</reference>
<reference key="4">
    <citation type="journal article" date="2010" name="J. Bacteriol.">
        <title>A monoacylglycerol lipase from Mycobacterium smegmatis involved in bacterial cell interaction.</title>
        <authorList>
            <person name="Dhouib R."/>
            <person name="Laval F."/>
            <person name="Carriere F."/>
            <person name="Daffe M."/>
            <person name="Canaan S."/>
        </authorList>
    </citation>
    <scope>FUNCTION</scope>
    <scope>CATALYTIC ACTIVITY</scope>
    <scope>BIOPHYSICOCHEMICAL PROPERTIES</scope>
    <scope>DISRUPTION PHENOTYPE</scope>
    <scope>MUTAGENESIS OF SER-111</scope>
    <scope>SUBCELLULAR LOCATION</scope>
    <scope>ACTIVE SITE</scope>
    <scope>SUBSTRATE SPECIFICITY</scope>
    <source>
        <strain>ATCC 700084 / mc(2)155</strain>
    </source>
</reference>
<protein>
    <recommendedName>
        <fullName evidence="3">Monoacylglycerol lipase</fullName>
        <shortName evidence="3">MGL</shortName>
        <ecNumber evidence="2">3.1.1.23</ecNumber>
    </recommendedName>
</protein>
<comment type="function">
    <text evidence="2">Contributes to cell growth, probably by hydrolyzing exogenous lipids. Catalyzes the hydrolysis of monoacylglycerols (MAG) with fatty acid chains ranging from C14 to C18, with a maximum activity on monoolein. Is unable to hydrolyze long-chain diacylglycerol (DAG).</text>
</comment>
<comment type="catalytic activity">
    <reaction evidence="2">
        <text>Hydrolyzes glycerol monoesters of long-chain fatty acids.</text>
        <dbReference type="EC" id="3.1.1.23"/>
    </reaction>
</comment>
<comment type="biophysicochemical properties">
    <phDependence>
        <text evidence="2">Optimum pH is 8. Highly stable from pH 6.5 to 9.0, and still shows a residual activity of 50% after 1 hour of incubation at pH 4.0.</text>
    </phDependence>
</comment>
<comment type="subcellular location">
    <subcellularLocation>
        <location evidence="2">Secreted</location>
        <location evidence="2">Cell wall</location>
    </subcellularLocation>
</comment>
<comment type="disruption phenotype">
    <text evidence="2">Disruption of the gene affects the morphology of the colony and impairs growth in the presence of monoolein. Cells lacking this gene are more sensitive to rifampicin and more resistant to isoniazid.</text>
</comment>
<comment type="similarity">
    <text evidence="4">Belongs to the AB hydrolase superfamily.</text>
</comment>
<feature type="chain" id="PRO_0000438238" description="Monoacylglycerol lipase">
    <location>
        <begin position="1"/>
        <end position="280"/>
    </location>
</feature>
<feature type="active site" description="Nucleophile" evidence="5">
    <location>
        <position position="111"/>
    </location>
</feature>
<feature type="active site" description="Charge relay system" evidence="1">
    <location>
        <position position="227"/>
    </location>
</feature>
<feature type="active site" description="Charge relay system" evidence="1">
    <location>
        <position position="257"/>
    </location>
</feature>
<feature type="mutagenesis site" description="Loss of lipase activity." evidence="2">
    <original>S</original>
    <variation>A</variation>
    <location>
        <position position="111"/>
    </location>
</feature>
<sequence>MVSSTRSEHSFAGVGGVRIVYDVWTPDTDPRGVVVLAHGYAEHAGRYHHVAQRFGAAGLLVYALDHRGHGRSGGKRVHLRDLSEFVEDFRTLVGIAANDHPTLPRIVLGHSMGGGIVFAYGARYPGEYSAMVLSGPAVNAHDGVSPVLVAVAKVLGKLAPGIPVENLDADAVSRDPEVVAAYKADPMVHHGKLPAGIARALIGLGQSMPQRAAALTAPLLVVHGDKDRLIPVAGSRLLVDRVASEDVHLKVYPGLYHEVFNEPEQKLVLDDVTSWIVSHL</sequence>
<dbReference type="EC" id="3.1.1.23" evidence="2"/>
<dbReference type="EMBL" id="CP000480">
    <property type="protein sequence ID" value="ABK74423.1"/>
    <property type="molecule type" value="Genomic_DNA"/>
</dbReference>
<dbReference type="EMBL" id="CP001663">
    <property type="protein sequence ID" value="AFP36694.1"/>
    <property type="molecule type" value="Genomic_DNA"/>
</dbReference>
<dbReference type="RefSeq" id="WP_011726751.1">
    <property type="nucleotide sequence ID" value="NZ_SIJM01000047.1"/>
</dbReference>
<dbReference type="RefSeq" id="YP_884635.1">
    <property type="nucleotide sequence ID" value="NC_008596.1"/>
</dbReference>
<dbReference type="SMR" id="A0QNZ7"/>
<dbReference type="STRING" id="246196.MSMEG_0220"/>
<dbReference type="ESTHER" id="mycs2-a0qnz7">
    <property type="family name" value="Monoglyceridelipase_lysophospholip"/>
</dbReference>
<dbReference type="PaxDb" id="246196-MSMEI_0213"/>
<dbReference type="KEGG" id="msg:MSMEI_0213"/>
<dbReference type="KEGG" id="msm:MSMEG_0220"/>
<dbReference type="PATRIC" id="fig|246196.19.peg.216"/>
<dbReference type="eggNOG" id="COG2267">
    <property type="taxonomic scope" value="Bacteria"/>
</dbReference>
<dbReference type="OrthoDB" id="9806902at2"/>
<dbReference type="Proteomes" id="UP000000757">
    <property type="component" value="Chromosome"/>
</dbReference>
<dbReference type="Proteomes" id="UP000006158">
    <property type="component" value="Chromosome"/>
</dbReference>
<dbReference type="GO" id="GO:0005576">
    <property type="term" value="C:extracellular region"/>
    <property type="evidence" value="ECO:0007669"/>
    <property type="project" value="UniProtKB-KW"/>
</dbReference>
<dbReference type="GO" id="GO:0005886">
    <property type="term" value="C:plasma membrane"/>
    <property type="evidence" value="ECO:0000304"/>
    <property type="project" value="UniProtKB"/>
</dbReference>
<dbReference type="GO" id="GO:0047372">
    <property type="term" value="F:monoacylglycerol lipase activity"/>
    <property type="evidence" value="ECO:0000314"/>
    <property type="project" value="UniProtKB"/>
</dbReference>
<dbReference type="GO" id="GO:0006633">
    <property type="term" value="P:fatty acid biosynthetic process"/>
    <property type="evidence" value="ECO:0007669"/>
    <property type="project" value="UniProtKB-KW"/>
</dbReference>
<dbReference type="GO" id="GO:0016042">
    <property type="term" value="P:lipid catabolic process"/>
    <property type="evidence" value="ECO:0007669"/>
    <property type="project" value="UniProtKB-KW"/>
</dbReference>
<dbReference type="FunFam" id="3.40.50.1820:FF:000117">
    <property type="entry name" value="Monoglyceride lipase, putative"/>
    <property type="match status" value="1"/>
</dbReference>
<dbReference type="Gene3D" id="3.40.50.1820">
    <property type="entry name" value="alpha/beta hydrolase"/>
    <property type="match status" value="1"/>
</dbReference>
<dbReference type="InterPro" id="IPR000073">
    <property type="entry name" value="AB_hydrolase_1"/>
</dbReference>
<dbReference type="InterPro" id="IPR029058">
    <property type="entry name" value="AB_hydrolase_fold"/>
</dbReference>
<dbReference type="InterPro" id="IPR022742">
    <property type="entry name" value="Hydrolase_4"/>
</dbReference>
<dbReference type="InterPro" id="IPR051044">
    <property type="entry name" value="MAG_DAG_Lipase"/>
</dbReference>
<dbReference type="PANTHER" id="PTHR11614">
    <property type="entry name" value="PHOSPHOLIPASE-RELATED"/>
    <property type="match status" value="1"/>
</dbReference>
<dbReference type="Pfam" id="PF12146">
    <property type="entry name" value="Hydrolase_4"/>
    <property type="match status" value="1"/>
</dbReference>
<dbReference type="PRINTS" id="PR00111">
    <property type="entry name" value="ABHYDROLASE"/>
</dbReference>
<dbReference type="SUPFAM" id="SSF53474">
    <property type="entry name" value="alpha/beta-Hydrolases"/>
    <property type="match status" value="1"/>
</dbReference>
<gene>
    <name type="ordered locus">MSMEG_0220</name>
    <name type="ordered locus">MSMEI_0213</name>
</gene>
<evidence type="ECO:0000250" key="1">
    <source>
        <dbReference type="UniProtKB" id="O07427"/>
    </source>
</evidence>
<evidence type="ECO:0000269" key="2">
    <source>
    </source>
</evidence>
<evidence type="ECO:0000303" key="3">
    <source>
    </source>
</evidence>
<evidence type="ECO:0000305" key="4"/>
<evidence type="ECO:0000305" key="5">
    <source>
    </source>
</evidence>
<accession>A0QNZ7</accession>
<name>MGLL_MYCS2</name>
<proteinExistence type="evidence at protein level"/>
<keyword id="KW-0134">Cell wall</keyword>
<keyword id="KW-0275">Fatty acid biosynthesis</keyword>
<keyword id="KW-0276">Fatty acid metabolism</keyword>
<keyword id="KW-0378">Hydrolase</keyword>
<keyword id="KW-0444">Lipid biosynthesis</keyword>
<keyword id="KW-0442">Lipid degradation</keyword>
<keyword id="KW-0443">Lipid metabolism</keyword>
<keyword id="KW-1185">Reference proteome</keyword>
<keyword id="KW-0964">Secreted</keyword>